<sequence length="442" mass="48459">MRILAKWLALAVLLCTTPAKAALDIVITEGVDAARPIAVMPFVWQGPGAAPQAIADVVMSDLVRSGTFKPLDELGLPQRNIGTVAQFQANSWSSVGAEALVLGTVKPYGTDQYLVSFDLIDLVKAQNQALKGPVSATEFLMDSRQTVISAAQFRQYGHRISDIVYEKLTGIRGAFLTRISYVVVNHTQKAPYQLMVADYDGVNEQMLLRSPEPLMSPTWSPDGRRLAYVSFENKKAEIFVQDLYTQVRTKVSSFPGINGAPAFSPDGKSLAITLSKDGQPEIYIIDIATKAIKRITNHYAIDTEPSWYPDGKSLIFTSERGGRPQIYRVELSSGKVSRETFEGEWNLGGSITPDGRSMIFVNRTNGKFNIARMDLSTRFMQVLTSTRLDESPSVAPNGTMVIYGTTYQGKQVLAAVSTDGRFKARLPAGQGEVKSPSWSPFL</sequence>
<organism>
    <name type="scientific">Shewanella baltica (strain OS185)</name>
    <dbReference type="NCBI Taxonomy" id="402882"/>
    <lineage>
        <taxon>Bacteria</taxon>
        <taxon>Pseudomonadati</taxon>
        <taxon>Pseudomonadota</taxon>
        <taxon>Gammaproteobacteria</taxon>
        <taxon>Alteromonadales</taxon>
        <taxon>Shewanellaceae</taxon>
        <taxon>Shewanella</taxon>
    </lineage>
</organism>
<name>TOLB_SHEB8</name>
<accession>A6WM46</accession>
<feature type="signal peptide" evidence="1">
    <location>
        <begin position="1"/>
        <end position="21"/>
    </location>
</feature>
<feature type="chain" id="PRO_5000260788" description="Tol-Pal system protein TolB" evidence="1">
    <location>
        <begin position="22"/>
        <end position="442"/>
    </location>
</feature>
<reference key="1">
    <citation type="submission" date="2007-07" db="EMBL/GenBank/DDBJ databases">
        <title>Complete sequence of chromosome of Shewanella baltica OS185.</title>
        <authorList>
            <consortium name="US DOE Joint Genome Institute"/>
            <person name="Copeland A."/>
            <person name="Lucas S."/>
            <person name="Lapidus A."/>
            <person name="Barry K."/>
            <person name="Glavina del Rio T."/>
            <person name="Dalin E."/>
            <person name="Tice H."/>
            <person name="Pitluck S."/>
            <person name="Sims D."/>
            <person name="Brettin T."/>
            <person name="Bruce D."/>
            <person name="Detter J.C."/>
            <person name="Han C."/>
            <person name="Schmutz J."/>
            <person name="Larimer F."/>
            <person name="Land M."/>
            <person name="Hauser L."/>
            <person name="Kyrpides N."/>
            <person name="Mikhailova N."/>
            <person name="Brettar I."/>
            <person name="Rodrigues J."/>
            <person name="Konstantinidis K."/>
            <person name="Tiedje J."/>
            <person name="Richardson P."/>
        </authorList>
    </citation>
    <scope>NUCLEOTIDE SEQUENCE [LARGE SCALE GENOMIC DNA]</scope>
    <source>
        <strain>OS185</strain>
    </source>
</reference>
<protein>
    <recommendedName>
        <fullName evidence="1">Tol-Pal system protein TolB</fullName>
    </recommendedName>
</protein>
<comment type="function">
    <text evidence="1">Part of the Tol-Pal system, which plays a role in outer membrane invagination during cell division and is important for maintaining outer membrane integrity.</text>
</comment>
<comment type="subunit">
    <text evidence="1">The Tol-Pal system is composed of five core proteins: the inner membrane proteins TolA, TolQ and TolR, the periplasmic protein TolB and the outer membrane protein Pal. They form a network linking the inner and outer membranes and the peptidoglycan layer.</text>
</comment>
<comment type="subcellular location">
    <subcellularLocation>
        <location evidence="1">Periplasm</location>
    </subcellularLocation>
</comment>
<comment type="similarity">
    <text evidence="1">Belongs to the TolB family.</text>
</comment>
<dbReference type="EMBL" id="CP000753">
    <property type="protein sequence ID" value="ABS07885.1"/>
    <property type="molecule type" value="Genomic_DNA"/>
</dbReference>
<dbReference type="RefSeq" id="WP_006087449.1">
    <property type="nucleotide sequence ID" value="NC_009665.1"/>
</dbReference>
<dbReference type="SMR" id="A6WM46"/>
<dbReference type="KEGG" id="sbm:Shew185_1742"/>
<dbReference type="HOGENOM" id="CLU_047123_0_0_6"/>
<dbReference type="GO" id="GO:0042597">
    <property type="term" value="C:periplasmic space"/>
    <property type="evidence" value="ECO:0007669"/>
    <property type="project" value="UniProtKB-SubCell"/>
</dbReference>
<dbReference type="GO" id="GO:0051301">
    <property type="term" value="P:cell division"/>
    <property type="evidence" value="ECO:0007669"/>
    <property type="project" value="UniProtKB-UniRule"/>
</dbReference>
<dbReference type="GO" id="GO:0017038">
    <property type="term" value="P:protein import"/>
    <property type="evidence" value="ECO:0007669"/>
    <property type="project" value="InterPro"/>
</dbReference>
<dbReference type="Gene3D" id="2.120.10.30">
    <property type="entry name" value="TolB, C-terminal domain"/>
    <property type="match status" value="1"/>
</dbReference>
<dbReference type="Gene3D" id="3.40.50.10070">
    <property type="entry name" value="TolB, N-terminal domain"/>
    <property type="match status" value="1"/>
</dbReference>
<dbReference type="HAMAP" id="MF_00671">
    <property type="entry name" value="TolB"/>
    <property type="match status" value="1"/>
</dbReference>
<dbReference type="InterPro" id="IPR011042">
    <property type="entry name" value="6-blade_b-propeller_TolB-like"/>
</dbReference>
<dbReference type="InterPro" id="IPR011659">
    <property type="entry name" value="PD40"/>
</dbReference>
<dbReference type="InterPro" id="IPR014167">
    <property type="entry name" value="Tol-Pal_TolB"/>
</dbReference>
<dbReference type="InterPro" id="IPR007195">
    <property type="entry name" value="TolB_N"/>
</dbReference>
<dbReference type="NCBIfam" id="TIGR02800">
    <property type="entry name" value="propeller_TolB"/>
    <property type="match status" value="1"/>
</dbReference>
<dbReference type="PANTHER" id="PTHR36842:SF1">
    <property type="entry name" value="PROTEIN TOLB"/>
    <property type="match status" value="1"/>
</dbReference>
<dbReference type="PANTHER" id="PTHR36842">
    <property type="entry name" value="PROTEIN TOLB HOMOLOG"/>
    <property type="match status" value="1"/>
</dbReference>
<dbReference type="Pfam" id="PF07676">
    <property type="entry name" value="PD40"/>
    <property type="match status" value="4"/>
</dbReference>
<dbReference type="Pfam" id="PF04052">
    <property type="entry name" value="TolB_N"/>
    <property type="match status" value="1"/>
</dbReference>
<dbReference type="SUPFAM" id="SSF52964">
    <property type="entry name" value="TolB, N-terminal domain"/>
    <property type="match status" value="1"/>
</dbReference>
<dbReference type="SUPFAM" id="SSF69304">
    <property type="entry name" value="Tricorn protease N-terminal domain"/>
    <property type="match status" value="1"/>
</dbReference>
<evidence type="ECO:0000255" key="1">
    <source>
        <dbReference type="HAMAP-Rule" id="MF_00671"/>
    </source>
</evidence>
<gene>
    <name evidence="1" type="primary">tolB</name>
    <name type="ordered locus">Shew185_1742</name>
</gene>
<keyword id="KW-0131">Cell cycle</keyword>
<keyword id="KW-0132">Cell division</keyword>
<keyword id="KW-0574">Periplasm</keyword>
<keyword id="KW-0732">Signal</keyword>
<proteinExistence type="inferred from homology"/>